<dbReference type="EC" id="3.6.4.-" evidence="1"/>
<dbReference type="EMBL" id="BC121897">
    <property type="protein sequence ID" value="AAI21898.1"/>
    <property type="molecule type" value="mRNA"/>
</dbReference>
<dbReference type="RefSeq" id="NP_001072923.1">
    <property type="nucleotide sequence ID" value="NM_001079455.1"/>
</dbReference>
<dbReference type="RefSeq" id="XP_031748617.1">
    <property type="nucleotide sequence ID" value="XM_031892757.1"/>
</dbReference>
<dbReference type="SMR" id="Q0P4U8"/>
<dbReference type="FunCoup" id="Q0P4U8">
    <property type="interactions" value="2920"/>
</dbReference>
<dbReference type="STRING" id="8364.ENSXETP00000051738"/>
<dbReference type="PaxDb" id="8364-ENSXETP00000000989"/>
<dbReference type="GeneID" id="780385"/>
<dbReference type="KEGG" id="xtr:780385"/>
<dbReference type="AGR" id="Xenbase:XB-GENE-493391"/>
<dbReference type="CTD" id="50485"/>
<dbReference type="Xenbase" id="XB-GENE-493391">
    <property type="gene designation" value="smarcal1"/>
</dbReference>
<dbReference type="eggNOG" id="KOG1000">
    <property type="taxonomic scope" value="Eukaryota"/>
</dbReference>
<dbReference type="HOGENOM" id="CLU_000315_33_1_1"/>
<dbReference type="InParanoid" id="Q0P4U8"/>
<dbReference type="OMA" id="KCVPHAE"/>
<dbReference type="OrthoDB" id="2801544at2759"/>
<dbReference type="PhylomeDB" id="Q0P4U8"/>
<dbReference type="TreeFam" id="TF106474"/>
<dbReference type="Proteomes" id="UP000008143">
    <property type="component" value="Chromosome 9"/>
</dbReference>
<dbReference type="Bgee" id="ENSXETG00000000465">
    <property type="expression patterns" value="Expressed in testis and 14 other cell types or tissues"/>
</dbReference>
<dbReference type="GO" id="GO:0005634">
    <property type="term" value="C:nucleus"/>
    <property type="evidence" value="ECO:0000250"/>
    <property type="project" value="UniProtKB"/>
</dbReference>
<dbReference type="GO" id="GO:0005524">
    <property type="term" value="F:ATP binding"/>
    <property type="evidence" value="ECO:0007669"/>
    <property type="project" value="UniProtKB-KW"/>
</dbReference>
<dbReference type="GO" id="GO:0036310">
    <property type="term" value="F:ATP-dependent DNA/DNA annealing activity"/>
    <property type="evidence" value="ECO:0000250"/>
    <property type="project" value="UniProtKB"/>
</dbReference>
<dbReference type="GO" id="GO:0004386">
    <property type="term" value="F:helicase activity"/>
    <property type="evidence" value="ECO:0007669"/>
    <property type="project" value="UniProtKB-KW"/>
</dbReference>
<dbReference type="GO" id="GO:0016787">
    <property type="term" value="F:hydrolase activity"/>
    <property type="evidence" value="ECO:0007669"/>
    <property type="project" value="UniProtKB-KW"/>
</dbReference>
<dbReference type="GO" id="GO:0006357">
    <property type="term" value="P:regulation of transcription by RNA polymerase II"/>
    <property type="evidence" value="ECO:0000250"/>
    <property type="project" value="UniProtKB"/>
</dbReference>
<dbReference type="CDD" id="cd18010">
    <property type="entry name" value="DEXHc_HARP_SMARCAL1"/>
    <property type="match status" value="1"/>
</dbReference>
<dbReference type="CDD" id="cd18793">
    <property type="entry name" value="SF2_C_SNF"/>
    <property type="match status" value="1"/>
</dbReference>
<dbReference type="FunFam" id="3.40.50.300:FF:001036">
    <property type="entry name" value="SWI/SNF related, matrix associated, actin dependent regulator of chromatin, subfamily a like 1"/>
    <property type="match status" value="1"/>
</dbReference>
<dbReference type="FunFam" id="3.40.50.10810:FF:000026">
    <property type="entry name" value="SWI/SNF related, matrix associated, actin dependent regulator of chromatin, subfamily a-like 1"/>
    <property type="match status" value="1"/>
</dbReference>
<dbReference type="Gene3D" id="3.40.50.300">
    <property type="entry name" value="P-loop containing nucleotide triphosphate hydrolases"/>
    <property type="match status" value="1"/>
</dbReference>
<dbReference type="Gene3D" id="3.40.50.10810">
    <property type="entry name" value="Tandem AAA-ATPase domain"/>
    <property type="match status" value="1"/>
</dbReference>
<dbReference type="InterPro" id="IPR010003">
    <property type="entry name" value="HARP_dom"/>
</dbReference>
<dbReference type="InterPro" id="IPR014001">
    <property type="entry name" value="Helicase_ATP-bd"/>
</dbReference>
<dbReference type="InterPro" id="IPR001650">
    <property type="entry name" value="Helicase_C-like"/>
</dbReference>
<dbReference type="InterPro" id="IPR027417">
    <property type="entry name" value="P-loop_NTPase"/>
</dbReference>
<dbReference type="InterPro" id="IPR038718">
    <property type="entry name" value="SNF2-like_sf"/>
</dbReference>
<dbReference type="InterPro" id="IPR049730">
    <property type="entry name" value="SNF2/RAD54-like_C"/>
</dbReference>
<dbReference type="InterPro" id="IPR000330">
    <property type="entry name" value="SNF2_N"/>
</dbReference>
<dbReference type="PANTHER" id="PTHR45766">
    <property type="entry name" value="DNA ANNEALING HELICASE AND ENDONUCLEASE ZRANB3 FAMILY MEMBER"/>
    <property type="match status" value="1"/>
</dbReference>
<dbReference type="PANTHER" id="PTHR45766:SF6">
    <property type="entry name" value="SWI_SNF-RELATED MATRIX-ASSOCIATED ACTIN-DEPENDENT REGULATOR OF CHROMATIN SUBFAMILY A-LIKE PROTEIN 1"/>
    <property type="match status" value="1"/>
</dbReference>
<dbReference type="Pfam" id="PF07443">
    <property type="entry name" value="HARP"/>
    <property type="match status" value="2"/>
</dbReference>
<dbReference type="Pfam" id="PF00271">
    <property type="entry name" value="Helicase_C"/>
    <property type="match status" value="1"/>
</dbReference>
<dbReference type="Pfam" id="PF00176">
    <property type="entry name" value="SNF2-rel_dom"/>
    <property type="match status" value="1"/>
</dbReference>
<dbReference type="SMART" id="SM00487">
    <property type="entry name" value="DEXDc"/>
    <property type="match status" value="1"/>
</dbReference>
<dbReference type="SMART" id="SM00490">
    <property type="entry name" value="HELICc"/>
    <property type="match status" value="1"/>
</dbReference>
<dbReference type="SUPFAM" id="SSF52540">
    <property type="entry name" value="P-loop containing nucleoside triphosphate hydrolases"/>
    <property type="match status" value="2"/>
</dbReference>
<dbReference type="PROSITE" id="PS51467">
    <property type="entry name" value="HARP"/>
    <property type="match status" value="2"/>
</dbReference>
<dbReference type="PROSITE" id="PS51192">
    <property type="entry name" value="HELICASE_ATP_BIND_1"/>
    <property type="match status" value="1"/>
</dbReference>
<dbReference type="PROSITE" id="PS51194">
    <property type="entry name" value="HELICASE_CTER"/>
    <property type="match status" value="1"/>
</dbReference>
<sequence length="942" mass="103733">MSVCLTEEQKRKIEENRQRALARRAERLAAQQNSQTNRSLSAPLNAQIPSGQQGVLPSAQSINATGTSRAANSKYAFQKSPSGGNTAPSVPGAAGNKVQAVGNRSHDSKSLTDPAKDVKGNYTVPEAQSVPSGPSNAPNPRHLYPAGTTPGQESAKHSNSYSRPEPLTACDNDTTGPGPLRSTTTITKFYGAGPGSKPAVPVSNKTVSEGRERGVTGSAAEAVPAKKASGATRGRCVKHAESRFRVEVGYSAELIALFKTIPSKNYDPATKMWNFGLEDYASLMSEVQQLQSVELKALEGMEGVQIAPPPATGGGTNINALLAMCNNWQRPSATLRGRCILVSRSRFEMEIGYHAEIIGLFKQMNTRNYDTKTRKWSFMLEDYQKLMESVRNIQQVEVEPLPRPVLQAFAPQFGKTTIIREEIPEVDLSQVDSKLGSNLMPFQRDGVNFAVSREGRLLLADDMGLGKTIQAICIAAYYRKEWPLLVVAPSSVRFTWAEAFQRWLPSIRPESVNVIVTGRDSQSASLINIVSFDLLGKMDKQIAATFQVIIIDESHFLKNVKTARCKAAMPLLKSAKRVMLLSGTPAMSRPAELYTQIAAVRPSFFPRFHDFGIRYCDAKQMPWGWDYSGSSNLNELKLLLEESIMIRRLKSEVLSQLPAKQRKMVVVAPEGITAKTKAALAAAAKEMAKGFKSKVQEKEALLLFYNRTAEAKIRSVLEYIMDLLESGREKFLVFAHHKLVLDHICEELGKKDVPYIRIDGNTSSADRQSLCHKFQMSEKSCVAVLSITAANMGLTLSSADLVVFAELFWNPGVLIQAEDRVHRIGQTSSVNIHYLVAKGTADDYLWPMIQEKIKVLGQAGLSEANFSETTESTDYFYKDPKQKTIYDLFQRSFSEEGAETNADEALLLEACEEADLGDAVCSPTDYSGNSCKRRKIDEYFAL</sequence>
<accession>Q0P4U8</accession>
<protein>
    <recommendedName>
        <fullName>SWI/SNF-related matrix-associated actin-dependent regulator of chromatin subfamily A-like protein 1</fullName>
        <ecNumber evidence="1">3.6.4.-</ecNumber>
    </recommendedName>
    <alternativeName>
        <fullName>HepA-related protein</fullName>
    </alternativeName>
    <alternativeName>
        <fullName>Sucrose nonfermenting protein 2-like 1</fullName>
    </alternativeName>
</protein>
<gene>
    <name type="primary">smarcal1</name>
    <name type="synonym">harp</name>
</gene>
<name>SMAL1_XENTR</name>
<reference key="1">
    <citation type="submission" date="2006-08" db="EMBL/GenBank/DDBJ databases">
        <authorList>
            <consortium name="NIH - Xenopus Gene Collection (XGC) project"/>
        </authorList>
    </citation>
    <scope>NUCLEOTIDE SEQUENCE [LARGE SCALE MRNA]</scope>
    <source>
        <tissue>Testis</tissue>
    </source>
</reference>
<proteinExistence type="evidence at transcript level"/>
<evidence type="ECO:0000250" key="1">
    <source>
        <dbReference type="UniProtKB" id="Q9NZC9"/>
    </source>
</evidence>
<evidence type="ECO:0000255" key="2"/>
<evidence type="ECO:0000255" key="3">
    <source>
        <dbReference type="PROSITE-ProRule" id="PRU00541"/>
    </source>
</evidence>
<evidence type="ECO:0000255" key="4">
    <source>
        <dbReference type="PROSITE-ProRule" id="PRU00542"/>
    </source>
</evidence>
<evidence type="ECO:0000255" key="5">
    <source>
        <dbReference type="PROSITE-ProRule" id="PRU00800"/>
    </source>
</evidence>
<evidence type="ECO:0000256" key="6">
    <source>
        <dbReference type="SAM" id="MobiDB-lite"/>
    </source>
</evidence>
<organism>
    <name type="scientific">Xenopus tropicalis</name>
    <name type="common">Western clawed frog</name>
    <name type="synonym">Silurana tropicalis</name>
    <dbReference type="NCBI Taxonomy" id="8364"/>
    <lineage>
        <taxon>Eukaryota</taxon>
        <taxon>Metazoa</taxon>
        <taxon>Chordata</taxon>
        <taxon>Craniata</taxon>
        <taxon>Vertebrata</taxon>
        <taxon>Euteleostomi</taxon>
        <taxon>Amphibia</taxon>
        <taxon>Batrachia</taxon>
        <taxon>Anura</taxon>
        <taxon>Pipoidea</taxon>
        <taxon>Pipidae</taxon>
        <taxon>Xenopodinae</taxon>
        <taxon>Xenopus</taxon>
        <taxon>Silurana</taxon>
    </lineage>
</organism>
<comment type="function">
    <text evidence="1">ATP-dependent annealing helicase that catalyzes the rewinding of the stably unwound DNA. Rewinds single-stranded DNA bubbles that are stably bound by replication protein A (RPA). Acts throughout the genome to reanneal stably unwound DNA, performing the opposite reaction of many enzymes, such as helicases and polymerases, that unwind DNA (By similarity).</text>
</comment>
<comment type="catalytic activity">
    <reaction evidence="1">
        <text>ATP + H2O = ADP + phosphate + H(+)</text>
        <dbReference type="Rhea" id="RHEA:13065"/>
        <dbReference type="ChEBI" id="CHEBI:15377"/>
        <dbReference type="ChEBI" id="CHEBI:15378"/>
        <dbReference type="ChEBI" id="CHEBI:30616"/>
        <dbReference type="ChEBI" id="CHEBI:43474"/>
        <dbReference type="ChEBI" id="CHEBI:456216"/>
    </reaction>
    <physiologicalReaction direction="left-to-right" evidence="1">
        <dbReference type="Rhea" id="RHEA:13066"/>
    </physiologicalReaction>
</comment>
<comment type="subcellular location">
    <subcellularLocation>
        <location evidence="1">Nucleus</location>
    </subcellularLocation>
</comment>
<comment type="similarity">
    <text evidence="5">Belongs to the SNF2/RAD54 helicase family. SMARCAL1 subfamily.</text>
</comment>
<keyword id="KW-0175">Coiled coil</keyword>
<keyword id="KW-0378">Hydrolase</keyword>
<keyword id="KW-0539">Nucleus</keyword>
<keyword id="KW-1185">Reference proteome</keyword>
<keyword id="KW-0677">Repeat</keyword>
<feature type="chain" id="PRO_0000361535" description="SWI/SNF-related matrix-associated actin-dependent regulator of chromatin subfamily A-like protein 1">
    <location>
        <begin position="1"/>
        <end position="942"/>
    </location>
</feature>
<feature type="domain" description="HARP 1" evidence="5">
    <location>
        <begin position="228"/>
        <end position="299"/>
    </location>
</feature>
<feature type="domain" description="HARP 2" evidence="5">
    <location>
        <begin position="331"/>
        <end position="402"/>
    </location>
</feature>
<feature type="domain" description="Helicase ATP-binding" evidence="3">
    <location>
        <begin position="448"/>
        <end position="603"/>
    </location>
</feature>
<feature type="domain" description="Helicase C-terminal" evidence="4">
    <location>
        <begin position="719"/>
        <end position="872"/>
    </location>
</feature>
<feature type="region of interest" description="Disordered" evidence="6">
    <location>
        <begin position="24"/>
        <end position="214"/>
    </location>
</feature>
<feature type="coiled-coil region" evidence="2">
    <location>
        <begin position="5"/>
        <end position="29"/>
    </location>
</feature>
<feature type="short sequence motif" description="DESH box">
    <location>
        <begin position="552"/>
        <end position="555"/>
    </location>
</feature>
<feature type="short sequence motif" description="Nuclear localization signal" evidence="1">
    <location>
        <begin position="647"/>
        <end position="664"/>
    </location>
</feature>
<feature type="compositionally biased region" description="Polar residues" evidence="6">
    <location>
        <begin position="34"/>
        <end position="71"/>
    </location>
</feature>
<feature type="compositionally biased region" description="Polar residues" evidence="6">
    <location>
        <begin position="79"/>
        <end position="88"/>
    </location>
</feature>
<feature type="compositionally biased region" description="Basic and acidic residues" evidence="6">
    <location>
        <begin position="104"/>
        <end position="119"/>
    </location>
</feature>
<feature type="compositionally biased region" description="Polar residues" evidence="6">
    <location>
        <begin position="129"/>
        <end position="138"/>
    </location>
</feature>
<feature type="compositionally biased region" description="Polar residues" evidence="6">
    <location>
        <begin position="149"/>
        <end position="162"/>
    </location>
</feature>
<feature type="compositionally biased region" description="Polar residues" evidence="6">
    <location>
        <begin position="171"/>
        <end position="187"/>
    </location>
</feature>
<feature type="binding site" evidence="3">
    <location>
        <begin position="461"/>
        <end position="468"/>
    </location>
    <ligand>
        <name>ATP</name>
        <dbReference type="ChEBI" id="CHEBI:30616"/>
    </ligand>
</feature>